<sequence length="177" mass="19331">MWTIMIGSKNRAKVHALQEVVIRDKIIVRSEAVPSDVASQPFSDQETIQGAINRANHCLSFDGVDYGVGLEGGVVRSEYGLFLCNWGALVSQTGDQWVAGGARVPLPQEVAHELEGGKELGDIMESLTKNPDVRMTDGAIGYLTDGEISRKAMFQHVVHLLIGQARRDGHLLRTVTH</sequence>
<dbReference type="EC" id="3.6.1.73" evidence="1"/>
<dbReference type="EMBL" id="BA000004">
    <property type="protein sequence ID" value="BAB06975.1"/>
    <property type="molecule type" value="Genomic_DNA"/>
</dbReference>
<dbReference type="PIR" id="H84056">
    <property type="entry name" value="H84056"/>
</dbReference>
<dbReference type="RefSeq" id="WP_010899397.1">
    <property type="nucleotide sequence ID" value="NC_002570.2"/>
</dbReference>
<dbReference type="SMR" id="Q9K7V3"/>
<dbReference type="STRING" id="272558.gene:10729168"/>
<dbReference type="KEGG" id="bha:BH3256"/>
<dbReference type="eggNOG" id="COG1986">
    <property type="taxonomic scope" value="Bacteria"/>
</dbReference>
<dbReference type="HOGENOM" id="CLU_087417_0_0_9"/>
<dbReference type="OrthoDB" id="164951at2"/>
<dbReference type="Proteomes" id="UP000001258">
    <property type="component" value="Chromosome"/>
</dbReference>
<dbReference type="GO" id="GO:0103023">
    <property type="term" value="F:ITPase activity"/>
    <property type="evidence" value="ECO:0007669"/>
    <property type="project" value="UniProtKB-EC"/>
</dbReference>
<dbReference type="GO" id="GO:0046872">
    <property type="term" value="F:metal ion binding"/>
    <property type="evidence" value="ECO:0007669"/>
    <property type="project" value="UniProtKB-KW"/>
</dbReference>
<dbReference type="GO" id="GO:0000166">
    <property type="term" value="F:nucleotide binding"/>
    <property type="evidence" value="ECO:0007669"/>
    <property type="project" value="UniProtKB-KW"/>
</dbReference>
<dbReference type="GO" id="GO:0017111">
    <property type="term" value="F:ribonucleoside triphosphate phosphatase activity"/>
    <property type="evidence" value="ECO:0000250"/>
    <property type="project" value="UniProtKB"/>
</dbReference>
<dbReference type="GO" id="GO:0009117">
    <property type="term" value="P:nucleotide metabolic process"/>
    <property type="evidence" value="ECO:0007669"/>
    <property type="project" value="UniProtKB-KW"/>
</dbReference>
<dbReference type="Gene3D" id="3.90.950.10">
    <property type="match status" value="1"/>
</dbReference>
<dbReference type="HAMAP" id="MF_00648">
    <property type="entry name" value="Non_canon_purine_NTPase_YjjX"/>
    <property type="match status" value="1"/>
</dbReference>
<dbReference type="InterPro" id="IPR029001">
    <property type="entry name" value="ITPase-like_fam"/>
</dbReference>
<dbReference type="InterPro" id="IPR002786">
    <property type="entry name" value="Non_canon_purine_NTPase"/>
</dbReference>
<dbReference type="InterPro" id="IPR026533">
    <property type="entry name" value="NTPase/PRRC1"/>
</dbReference>
<dbReference type="InterPro" id="IPR050299">
    <property type="entry name" value="YjjX_NTPase"/>
</dbReference>
<dbReference type="NCBIfam" id="NF002850">
    <property type="entry name" value="PRK03114.1"/>
    <property type="match status" value="1"/>
</dbReference>
<dbReference type="PANTHER" id="PTHR34699">
    <property type="match status" value="1"/>
</dbReference>
<dbReference type="PANTHER" id="PTHR34699:SF2">
    <property type="entry name" value="NON-CANONICAL PURINE NTP PHOSPHATASE_PRRC1 DOMAIN-CONTAINING PROTEIN"/>
    <property type="match status" value="1"/>
</dbReference>
<dbReference type="Pfam" id="PF01931">
    <property type="entry name" value="NTPase_I-T"/>
    <property type="match status" value="1"/>
</dbReference>
<dbReference type="SUPFAM" id="SSF52972">
    <property type="entry name" value="ITPase-like"/>
    <property type="match status" value="1"/>
</dbReference>
<organism>
    <name type="scientific">Halalkalibacterium halodurans (strain ATCC BAA-125 / DSM 18197 / FERM 7344 / JCM 9153 / C-125)</name>
    <name type="common">Bacillus halodurans</name>
    <dbReference type="NCBI Taxonomy" id="272558"/>
    <lineage>
        <taxon>Bacteria</taxon>
        <taxon>Bacillati</taxon>
        <taxon>Bacillota</taxon>
        <taxon>Bacilli</taxon>
        <taxon>Bacillales</taxon>
        <taxon>Bacillaceae</taxon>
        <taxon>Halalkalibacterium (ex Joshi et al. 2022)</taxon>
    </lineage>
</organism>
<feature type="chain" id="PRO_0000156336" description="Probable inosine/xanthosine triphosphatase">
    <location>
        <begin position="1"/>
        <end position="177"/>
    </location>
</feature>
<accession>Q9K7V3</accession>
<proteinExistence type="inferred from homology"/>
<name>NCPP_HALH5</name>
<comment type="function">
    <text evidence="1">Phosphatase that hydrolyzes non-canonical purine nucleotides such as XTP and ITP to their respective diphosphate derivatives. Probably excludes non-canonical purines from DNA/RNA precursor pool, thus preventing their incorporation into DNA/RNA and avoiding chromosomal lesions.</text>
</comment>
<comment type="catalytic activity">
    <reaction evidence="1">
        <text>XTP + H2O = XDP + phosphate + H(+)</text>
        <dbReference type="Rhea" id="RHEA:28406"/>
        <dbReference type="ChEBI" id="CHEBI:15377"/>
        <dbReference type="ChEBI" id="CHEBI:15378"/>
        <dbReference type="ChEBI" id="CHEBI:43474"/>
        <dbReference type="ChEBI" id="CHEBI:59884"/>
        <dbReference type="ChEBI" id="CHEBI:61314"/>
        <dbReference type="EC" id="3.6.1.73"/>
    </reaction>
</comment>
<comment type="catalytic activity">
    <reaction evidence="1">
        <text>ITP + H2O = IDP + phosphate + H(+)</text>
        <dbReference type="Rhea" id="RHEA:28330"/>
        <dbReference type="ChEBI" id="CHEBI:15377"/>
        <dbReference type="ChEBI" id="CHEBI:15378"/>
        <dbReference type="ChEBI" id="CHEBI:43474"/>
        <dbReference type="ChEBI" id="CHEBI:58280"/>
        <dbReference type="ChEBI" id="CHEBI:61402"/>
        <dbReference type="EC" id="3.6.1.73"/>
    </reaction>
</comment>
<comment type="cofactor">
    <cofactor evidence="1">
        <name>Mg(2+)</name>
        <dbReference type="ChEBI" id="CHEBI:18420"/>
    </cofactor>
    <cofactor evidence="1">
        <name>Mn(2+)</name>
        <dbReference type="ChEBI" id="CHEBI:29035"/>
    </cofactor>
    <text evidence="1">Binds 1 divalent metal cation per subunit; can use either Mg(2+) or Mn(2+).</text>
</comment>
<comment type="subunit">
    <text evidence="1">Homodimer.</text>
</comment>
<comment type="similarity">
    <text evidence="1">Belongs to the YjjX NTPase family.</text>
</comment>
<gene>
    <name type="ordered locus">BH3256</name>
</gene>
<evidence type="ECO:0000255" key="1">
    <source>
        <dbReference type="HAMAP-Rule" id="MF_00648"/>
    </source>
</evidence>
<reference key="1">
    <citation type="journal article" date="2000" name="Nucleic Acids Res.">
        <title>Complete genome sequence of the alkaliphilic bacterium Bacillus halodurans and genomic sequence comparison with Bacillus subtilis.</title>
        <authorList>
            <person name="Takami H."/>
            <person name="Nakasone K."/>
            <person name="Takaki Y."/>
            <person name="Maeno G."/>
            <person name="Sasaki R."/>
            <person name="Masui N."/>
            <person name="Fuji F."/>
            <person name="Hirama C."/>
            <person name="Nakamura Y."/>
            <person name="Ogasawara N."/>
            <person name="Kuhara S."/>
            <person name="Horikoshi K."/>
        </authorList>
    </citation>
    <scope>NUCLEOTIDE SEQUENCE [LARGE SCALE GENOMIC DNA]</scope>
    <source>
        <strain>ATCC BAA-125 / DSM 18197 / FERM 7344 / JCM 9153 / C-125</strain>
    </source>
</reference>
<protein>
    <recommendedName>
        <fullName evidence="1">Probable inosine/xanthosine triphosphatase</fullName>
        <shortName evidence="1">ITPase/XTPase</shortName>
        <ecNumber evidence="1">3.6.1.73</ecNumber>
    </recommendedName>
    <alternativeName>
        <fullName evidence="1">Non-canonical purine NTP phosphatase</fullName>
    </alternativeName>
    <alternativeName>
        <fullName evidence="1">Non-standard purine NTP phosphatase</fullName>
    </alternativeName>
    <alternativeName>
        <fullName evidence="1">Nucleoside-triphosphate phosphatase</fullName>
        <shortName evidence="1">NTPase</shortName>
    </alternativeName>
</protein>
<keyword id="KW-0378">Hydrolase</keyword>
<keyword id="KW-0460">Magnesium</keyword>
<keyword id="KW-0464">Manganese</keyword>
<keyword id="KW-0479">Metal-binding</keyword>
<keyword id="KW-0546">Nucleotide metabolism</keyword>
<keyword id="KW-0547">Nucleotide-binding</keyword>
<keyword id="KW-1185">Reference proteome</keyword>